<sequence length="585" mass="65437">MGRIIRVTGPLVVADGMKGAKMYEVVRVGEIGLIGEIIRLEGDKAVIQVYEETAGIRPGEPVEGTGSSLSVELGPGLLTAMYDGIQRPLEVLRQLSGDFIARGLTAPALPRDKKWHFTPKVKVGDKVVGGDVLGVVPETSIIEHKILVPPWVEGEIVEIAEEGDYTVEEVIAKVKKPDGTIEELKMYHRWPVRVKRPYKQKLPPEVPLITGQRTIDTFFSQAKGGTAAIPGPFGSGKTVTQHQLAKWSDAQVVVYIGCGERGNEMTDVLEEFPKLKDPKTGKPLMERTVLIANTSNMPVAAREASIYTGITIAEYFRDQGYDVALMADSTSRWAEALREISGRLEEMPGEEGYPAYLASKIAEFYERAGRVITLGSDERVGSVSVIGAVSPPGGDFSEPVVQNTLRVVKVFWALDADLARRRHFPAINWLRSYSLYIDAIQDWWHKNVDPEWRKMRDTAMALLQKEAELQEIVRIVGPDALPDREKAILIVTRMLREDYLQQDAFDEVDTYCPPKKQVTMMRVILNFYEKTMQAVDRGVPVDEIAKLPVREKIGRMKFEPDVEKVRALIDETNQQFEELFKKYGA</sequence>
<evidence type="ECO:0000255" key="1">
    <source>
        <dbReference type="HAMAP-Rule" id="MF_00309"/>
    </source>
</evidence>
<proteinExistence type="inferred from homology"/>
<name>AATA_THEKO</name>
<dbReference type="EC" id="7.1.2.2" evidence="1"/>
<dbReference type="EMBL" id="AP006878">
    <property type="protein sequence ID" value="BAD85791.1"/>
    <property type="molecule type" value="Genomic_DNA"/>
</dbReference>
<dbReference type="RefSeq" id="WP_011250553.1">
    <property type="nucleotide sequence ID" value="NC_006624.1"/>
</dbReference>
<dbReference type="SMR" id="Q5JIR3"/>
<dbReference type="FunCoup" id="Q5JIR3">
    <property type="interactions" value="89"/>
</dbReference>
<dbReference type="STRING" id="69014.TK1602"/>
<dbReference type="EnsemblBacteria" id="BAD85791">
    <property type="protein sequence ID" value="BAD85791"/>
    <property type="gene ID" value="TK1602"/>
</dbReference>
<dbReference type="GeneID" id="78448130"/>
<dbReference type="KEGG" id="tko:TK1602"/>
<dbReference type="PATRIC" id="fig|69014.16.peg.1561"/>
<dbReference type="eggNOG" id="arCOG00868">
    <property type="taxonomic scope" value="Archaea"/>
</dbReference>
<dbReference type="HOGENOM" id="CLU_008162_3_1_2"/>
<dbReference type="InParanoid" id="Q5JIR3"/>
<dbReference type="OrthoDB" id="115235at2157"/>
<dbReference type="PhylomeDB" id="Q5JIR3"/>
<dbReference type="Proteomes" id="UP000000536">
    <property type="component" value="Chromosome"/>
</dbReference>
<dbReference type="GO" id="GO:0005886">
    <property type="term" value="C:plasma membrane"/>
    <property type="evidence" value="ECO:0007669"/>
    <property type="project" value="UniProtKB-SubCell"/>
</dbReference>
<dbReference type="GO" id="GO:0033178">
    <property type="term" value="C:proton-transporting two-sector ATPase complex, catalytic domain"/>
    <property type="evidence" value="ECO:0007669"/>
    <property type="project" value="InterPro"/>
</dbReference>
<dbReference type="GO" id="GO:0005524">
    <property type="term" value="F:ATP binding"/>
    <property type="evidence" value="ECO:0007669"/>
    <property type="project" value="UniProtKB-UniRule"/>
</dbReference>
<dbReference type="GO" id="GO:0016887">
    <property type="term" value="F:ATP hydrolysis activity"/>
    <property type="evidence" value="ECO:0007669"/>
    <property type="project" value="InterPro"/>
</dbReference>
<dbReference type="GO" id="GO:0046933">
    <property type="term" value="F:proton-transporting ATP synthase activity, rotational mechanism"/>
    <property type="evidence" value="ECO:0007669"/>
    <property type="project" value="UniProtKB-UniRule"/>
</dbReference>
<dbReference type="GO" id="GO:0046961">
    <property type="term" value="F:proton-transporting ATPase activity, rotational mechanism"/>
    <property type="evidence" value="ECO:0000318"/>
    <property type="project" value="GO_Central"/>
</dbReference>
<dbReference type="GO" id="GO:0042777">
    <property type="term" value="P:proton motive force-driven plasma membrane ATP synthesis"/>
    <property type="evidence" value="ECO:0007669"/>
    <property type="project" value="UniProtKB-UniRule"/>
</dbReference>
<dbReference type="GO" id="GO:1902600">
    <property type="term" value="P:proton transmembrane transport"/>
    <property type="evidence" value="ECO:0000318"/>
    <property type="project" value="GO_Central"/>
</dbReference>
<dbReference type="CDD" id="cd18111">
    <property type="entry name" value="ATP-synt_V_A-type_alpha_C"/>
    <property type="match status" value="1"/>
</dbReference>
<dbReference type="CDD" id="cd18119">
    <property type="entry name" value="ATP-synt_V_A-type_alpha_N"/>
    <property type="match status" value="1"/>
</dbReference>
<dbReference type="CDD" id="cd01134">
    <property type="entry name" value="V_A-ATPase_A"/>
    <property type="match status" value="1"/>
</dbReference>
<dbReference type="FunFam" id="3.40.50.300:FF:000675">
    <property type="entry name" value="V-type ATP synthase alpha chain"/>
    <property type="match status" value="1"/>
</dbReference>
<dbReference type="FunFam" id="1.10.1140.10:FF:000002">
    <property type="entry name" value="V-type proton ATPase catalytic subunit A"/>
    <property type="match status" value="1"/>
</dbReference>
<dbReference type="FunFam" id="2.40.30.20:FF:000002">
    <property type="entry name" value="V-type proton ATPase catalytic subunit A"/>
    <property type="match status" value="1"/>
</dbReference>
<dbReference type="FunFam" id="2.40.50.100:FF:000008">
    <property type="entry name" value="V-type proton ATPase catalytic subunit A"/>
    <property type="match status" value="1"/>
</dbReference>
<dbReference type="Gene3D" id="2.40.30.20">
    <property type="match status" value="1"/>
</dbReference>
<dbReference type="Gene3D" id="2.40.50.100">
    <property type="match status" value="1"/>
</dbReference>
<dbReference type="Gene3D" id="1.10.1140.10">
    <property type="entry name" value="Bovine Mitochondrial F1-atpase, Atp Synthase Beta Chain, Chain D, domain 3"/>
    <property type="match status" value="1"/>
</dbReference>
<dbReference type="Gene3D" id="3.40.50.300">
    <property type="entry name" value="P-loop containing nucleotide triphosphate hydrolases"/>
    <property type="match status" value="1"/>
</dbReference>
<dbReference type="HAMAP" id="MF_00309">
    <property type="entry name" value="ATP_synth_A_arch"/>
    <property type="match status" value="1"/>
</dbReference>
<dbReference type="InterPro" id="IPR003593">
    <property type="entry name" value="AAA+_ATPase"/>
</dbReference>
<dbReference type="InterPro" id="IPR055190">
    <property type="entry name" value="ATP-synt_VA_C"/>
</dbReference>
<dbReference type="InterPro" id="IPR031686">
    <property type="entry name" value="ATP-synth_a_Xtn"/>
</dbReference>
<dbReference type="InterPro" id="IPR023366">
    <property type="entry name" value="ATP_synth_asu-like_sf"/>
</dbReference>
<dbReference type="InterPro" id="IPR005726">
    <property type="entry name" value="ATP_synth_asu_arc"/>
</dbReference>
<dbReference type="InterPro" id="IPR020003">
    <property type="entry name" value="ATPase_a/bsu_AS"/>
</dbReference>
<dbReference type="InterPro" id="IPR004100">
    <property type="entry name" value="ATPase_F1/V1/A1_a/bsu_N"/>
</dbReference>
<dbReference type="InterPro" id="IPR036121">
    <property type="entry name" value="ATPase_F1/V1/A1_a/bsu_N_sf"/>
</dbReference>
<dbReference type="InterPro" id="IPR000194">
    <property type="entry name" value="ATPase_F1/V1/A1_a/bsu_nucl-bd"/>
</dbReference>
<dbReference type="InterPro" id="IPR024034">
    <property type="entry name" value="ATPase_F1/V1_b/a_C"/>
</dbReference>
<dbReference type="InterPro" id="IPR027417">
    <property type="entry name" value="P-loop_NTPase"/>
</dbReference>
<dbReference type="InterPro" id="IPR022878">
    <property type="entry name" value="V-ATPase_asu"/>
</dbReference>
<dbReference type="NCBIfam" id="TIGR01043">
    <property type="entry name" value="ATP_syn_A_arch"/>
    <property type="match status" value="1"/>
</dbReference>
<dbReference type="NCBIfam" id="NF003220">
    <property type="entry name" value="PRK04192.1"/>
    <property type="match status" value="1"/>
</dbReference>
<dbReference type="PANTHER" id="PTHR43607:SF1">
    <property type="entry name" value="H(+)-TRANSPORTING TWO-SECTOR ATPASE"/>
    <property type="match status" value="1"/>
</dbReference>
<dbReference type="PANTHER" id="PTHR43607">
    <property type="entry name" value="V-TYPE PROTON ATPASE CATALYTIC SUBUNIT A"/>
    <property type="match status" value="1"/>
</dbReference>
<dbReference type="Pfam" id="PF00006">
    <property type="entry name" value="ATP-synt_ab"/>
    <property type="match status" value="1"/>
</dbReference>
<dbReference type="Pfam" id="PF02874">
    <property type="entry name" value="ATP-synt_ab_N"/>
    <property type="match status" value="1"/>
</dbReference>
<dbReference type="Pfam" id="PF16886">
    <property type="entry name" value="ATP-synt_ab_Xtn"/>
    <property type="match status" value="1"/>
</dbReference>
<dbReference type="Pfam" id="PF22919">
    <property type="entry name" value="ATP-synt_VA_C"/>
    <property type="match status" value="1"/>
</dbReference>
<dbReference type="SMART" id="SM00382">
    <property type="entry name" value="AAA"/>
    <property type="match status" value="1"/>
</dbReference>
<dbReference type="SUPFAM" id="SSF47917">
    <property type="entry name" value="C-terminal domain of alpha and beta subunits of F1 ATP synthase"/>
    <property type="match status" value="1"/>
</dbReference>
<dbReference type="SUPFAM" id="SSF50615">
    <property type="entry name" value="N-terminal domain of alpha and beta subunits of F1 ATP synthase"/>
    <property type="match status" value="1"/>
</dbReference>
<dbReference type="SUPFAM" id="SSF52540">
    <property type="entry name" value="P-loop containing nucleoside triphosphate hydrolases"/>
    <property type="match status" value="1"/>
</dbReference>
<dbReference type="PROSITE" id="PS00152">
    <property type="entry name" value="ATPASE_ALPHA_BETA"/>
    <property type="match status" value="1"/>
</dbReference>
<comment type="function">
    <text>Produces ATP from ADP in the presence of a proton gradient across the membrane. The archaeal alpha chain is a catalytic subunit.</text>
</comment>
<comment type="function">
    <text evidence="1">Component of the A-type ATP synthase that produces ATP from ADP in the presence of a proton gradient across the membrane. The A chain is the catalytic subunit.</text>
</comment>
<comment type="catalytic activity">
    <reaction evidence="1">
        <text>ATP + H2O + 4 H(+)(in) = ADP + phosphate + 5 H(+)(out)</text>
        <dbReference type="Rhea" id="RHEA:57720"/>
        <dbReference type="ChEBI" id="CHEBI:15377"/>
        <dbReference type="ChEBI" id="CHEBI:15378"/>
        <dbReference type="ChEBI" id="CHEBI:30616"/>
        <dbReference type="ChEBI" id="CHEBI:43474"/>
        <dbReference type="ChEBI" id="CHEBI:456216"/>
        <dbReference type="EC" id="7.1.2.2"/>
    </reaction>
</comment>
<comment type="subunit">
    <text evidence="1">Has multiple subunits with at least A(3), B(3), C, D, E, F, H, I and proteolipid K(x).</text>
</comment>
<comment type="subcellular location">
    <subcellularLocation>
        <location evidence="1">Cell membrane</location>
        <topology evidence="1">Peripheral membrane protein</topology>
    </subcellularLocation>
</comment>
<comment type="similarity">
    <text evidence="1">Belongs to the ATPase alpha/beta chains family.</text>
</comment>
<organism>
    <name type="scientific">Thermococcus kodakarensis (strain ATCC BAA-918 / JCM 12380 / KOD1)</name>
    <name type="common">Pyrococcus kodakaraensis (strain KOD1)</name>
    <dbReference type="NCBI Taxonomy" id="69014"/>
    <lineage>
        <taxon>Archaea</taxon>
        <taxon>Methanobacteriati</taxon>
        <taxon>Methanobacteriota</taxon>
        <taxon>Thermococci</taxon>
        <taxon>Thermococcales</taxon>
        <taxon>Thermococcaceae</taxon>
        <taxon>Thermococcus</taxon>
    </lineage>
</organism>
<protein>
    <recommendedName>
        <fullName evidence="1">A-type ATP synthase subunit A</fullName>
        <ecNumber evidence="1">7.1.2.2</ecNumber>
    </recommendedName>
</protein>
<keyword id="KW-0066">ATP synthesis</keyword>
<keyword id="KW-0067">ATP-binding</keyword>
<keyword id="KW-1003">Cell membrane</keyword>
<keyword id="KW-0375">Hydrogen ion transport</keyword>
<keyword id="KW-0406">Ion transport</keyword>
<keyword id="KW-0472">Membrane</keyword>
<keyword id="KW-0547">Nucleotide-binding</keyword>
<keyword id="KW-1185">Reference proteome</keyword>
<keyword id="KW-1278">Translocase</keyword>
<keyword id="KW-0813">Transport</keyword>
<gene>
    <name evidence="1" type="primary">atpA</name>
    <name type="ordered locus">TK1602</name>
</gene>
<feature type="chain" id="PRO_0000144604" description="A-type ATP synthase subunit A">
    <location>
        <begin position="1"/>
        <end position="585"/>
    </location>
</feature>
<feature type="binding site" evidence="1">
    <location>
        <begin position="231"/>
        <end position="238"/>
    </location>
    <ligand>
        <name>ATP</name>
        <dbReference type="ChEBI" id="CHEBI:30616"/>
    </ligand>
</feature>
<reference key="1">
    <citation type="journal article" date="2005" name="Genome Res.">
        <title>Complete genome sequence of the hyperthermophilic archaeon Thermococcus kodakaraensis KOD1 and comparison with Pyrococcus genomes.</title>
        <authorList>
            <person name="Fukui T."/>
            <person name="Atomi H."/>
            <person name="Kanai T."/>
            <person name="Matsumi R."/>
            <person name="Fujiwara S."/>
            <person name="Imanaka T."/>
        </authorList>
    </citation>
    <scope>NUCLEOTIDE SEQUENCE [LARGE SCALE GENOMIC DNA]</scope>
    <source>
        <strain>ATCC BAA-918 / JCM 12380 / KOD1</strain>
    </source>
</reference>
<accession>Q5JIR3</accession>